<name>DAPE_BRASO</name>
<proteinExistence type="inferred from homology"/>
<keyword id="KW-0028">Amino-acid biosynthesis</keyword>
<keyword id="KW-0170">Cobalt</keyword>
<keyword id="KW-0220">Diaminopimelate biosynthesis</keyword>
<keyword id="KW-0378">Hydrolase</keyword>
<keyword id="KW-0457">Lysine biosynthesis</keyword>
<keyword id="KW-0479">Metal-binding</keyword>
<keyword id="KW-1185">Reference proteome</keyword>
<keyword id="KW-0862">Zinc</keyword>
<feature type="chain" id="PRO_0000375483" description="Succinyl-diaminopimelate desuccinylase">
    <location>
        <begin position="1"/>
        <end position="384"/>
    </location>
</feature>
<feature type="active site" evidence="1">
    <location>
        <position position="73"/>
    </location>
</feature>
<feature type="active site" description="Proton acceptor" evidence="1">
    <location>
        <position position="139"/>
    </location>
</feature>
<feature type="binding site" evidence="1">
    <location>
        <position position="71"/>
    </location>
    <ligand>
        <name>Zn(2+)</name>
        <dbReference type="ChEBI" id="CHEBI:29105"/>
        <label>1</label>
    </ligand>
</feature>
<feature type="binding site" evidence="1">
    <location>
        <position position="104"/>
    </location>
    <ligand>
        <name>Zn(2+)</name>
        <dbReference type="ChEBI" id="CHEBI:29105"/>
        <label>1</label>
    </ligand>
</feature>
<feature type="binding site" evidence="1">
    <location>
        <position position="104"/>
    </location>
    <ligand>
        <name>Zn(2+)</name>
        <dbReference type="ChEBI" id="CHEBI:29105"/>
        <label>2</label>
    </ligand>
</feature>
<feature type="binding site" evidence="1">
    <location>
        <position position="140"/>
    </location>
    <ligand>
        <name>Zn(2+)</name>
        <dbReference type="ChEBI" id="CHEBI:29105"/>
        <label>2</label>
    </ligand>
</feature>
<feature type="binding site" evidence="1">
    <location>
        <position position="168"/>
    </location>
    <ligand>
        <name>Zn(2+)</name>
        <dbReference type="ChEBI" id="CHEBI:29105"/>
        <label>1</label>
    </ligand>
</feature>
<feature type="binding site" evidence="1">
    <location>
        <position position="357"/>
    </location>
    <ligand>
        <name>Zn(2+)</name>
        <dbReference type="ChEBI" id="CHEBI:29105"/>
        <label>2</label>
    </ligand>
</feature>
<reference key="1">
    <citation type="journal article" date="2007" name="Science">
        <title>Legumes symbioses: absence of nod genes in photosynthetic bradyrhizobia.</title>
        <authorList>
            <person name="Giraud E."/>
            <person name="Moulin L."/>
            <person name="Vallenet D."/>
            <person name="Barbe V."/>
            <person name="Cytryn E."/>
            <person name="Avarre J.-C."/>
            <person name="Jaubert M."/>
            <person name="Simon D."/>
            <person name="Cartieaux F."/>
            <person name="Prin Y."/>
            <person name="Bena G."/>
            <person name="Hannibal L."/>
            <person name="Fardoux J."/>
            <person name="Kojadinovic M."/>
            <person name="Vuillet L."/>
            <person name="Lajus A."/>
            <person name="Cruveiller S."/>
            <person name="Rouy Z."/>
            <person name="Mangenot S."/>
            <person name="Segurens B."/>
            <person name="Dossat C."/>
            <person name="Franck W.L."/>
            <person name="Chang W.-S."/>
            <person name="Saunders E."/>
            <person name="Bruce D."/>
            <person name="Richardson P."/>
            <person name="Normand P."/>
            <person name="Dreyfus B."/>
            <person name="Pignol D."/>
            <person name="Stacey G."/>
            <person name="Emerich D."/>
            <person name="Vermeglio A."/>
            <person name="Medigue C."/>
            <person name="Sadowsky M."/>
        </authorList>
    </citation>
    <scope>NUCLEOTIDE SEQUENCE [LARGE SCALE GENOMIC DNA]</scope>
    <source>
        <strain>ORS 278</strain>
    </source>
</reference>
<protein>
    <recommendedName>
        <fullName evidence="1">Succinyl-diaminopimelate desuccinylase</fullName>
        <shortName evidence="1">SDAP desuccinylase</shortName>
        <ecNumber evidence="1">3.5.1.18</ecNumber>
    </recommendedName>
    <alternativeName>
        <fullName evidence="1">N-succinyl-LL-2,6-diaminoheptanedioate amidohydrolase</fullName>
    </alternativeName>
</protein>
<gene>
    <name evidence="1" type="primary">dapE</name>
    <name type="ordered locus">BRADO0774</name>
</gene>
<dbReference type="EC" id="3.5.1.18" evidence="1"/>
<dbReference type="EMBL" id="CU234118">
    <property type="protein sequence ID" value="CAL74699.1"/>
    <property type="molecule type" value="Genomic_DNA"/>
</dbReference>
<dbReference type="RefSeq" id="WP_011923954.1">
    <property type="nucleotide sequence ID" value="NC_009445.1"/>
</dbReference>
<dbReference type="SMR" id="A4YLC3"/>
<dbReference type="STRING" id="114615.BRADO0774"/>
<dbReference type="KEGG" id="bra:BRADO0774"/>
<dbReference type="eggNOG" id="COG0624">
    <property type="taxonomic scope" value="Bacteria"/>
</dbReference>
<dbReference type="HOGENOM" id="CLU_021802_4_0_5"/>
<dbReference type="OrthoDB" id="9809784at2"/>
<dbReference type="UniPathway" id="UPA00034">
    <property type="reaction ID" value="UER00021"/>
</dbReference>
<dbReference type="Proteomes" id="UP000001994">
    <property type="component" value="Chromosome"/>
</dbReference>
<dbReference type="GO" id="GO:0008777">
    <property type="term" value="F:acetylornithine deacetylase activity"/>
    <property type="evidence" value="ECO:0007669"/>
    <property type="project" value="TreeGrafter"/>
</dbReference>
<dbReference type="GO" id="GO:0050897">
    <property type="term" value="F:cobalt ion binding"/>
    <property type="evidence" value="ECO:0007669"/>
    <property type="project" value="UniProtKB-UniRule"/>
</dbReference>
<dbReference type="GO" id="GO:0009014">
    <property type="term" value="F:succinyl-diaminopimelate desuccinylase activity"/>
    <property type="evidence" value="ECO:0007669"/>
    <property type="project" value="UniProtKB-UniRule"/>
</dbReference>
<dbReference type="GO" id="GO:0008270">
    <property type="term" value="F:zinc ion binding"/>
    <property type="evidence" value="ECO:0007669"/>
    <property type="project" value="UniProtKB-UniRule"/>
</dbReference>
<dbReference type="GO" id="GO:0019877">
    <property type="term" value="P:diaminopimelate biosynthetic process"/>
    <property type="evidence" value="ECO:0007669"/>
    <property type="project" value="UniProtKB-UniRule"/>
</dbReference>
<dbReference type="GO" id="GO:0006526">
    <property type="term" value="P:L-arginine biosynthetic process"/>
    <property type="evidence" value="ECO:0007669"/>
    <property type="project" value="TreeGrafter"/>
</dbReference>
<dbReference type="GO" id="GO:0009089">
    <property type="term" value="P:lysine biosynthetic process via diaminopimelate"/>
    <property type="evidence" value="ECO:0007669"/>
    <property type="project" value="UniProtKB-UniRule"/>
</dbReference>
<dbReference type="CDD" id="cd03891">
    <property type="entry name" value="M20_DapE_proteobac"/>
    <property type="match status" value="1"/>
</dbReference>
<dbReference type="Gene3D" id="3.40.630.10">
    <property type="entry name" value="Zn peptidases"/>
    <property type="match status" value="2"/>
</dbReference>
<dbReference type="HAMAP" id="MF_01690">
    <property type="entry name" value="DapE"/>
    <property type="match status" value="1"/>
</dbReference>
<dbReference type="InterPro" id="IPR036264">
    <property type="entry name" value="Bact_exopeptidase_dim_dom"/>
</dbReference>
<dbReference type="InterPro" id="IPR005941">
    <property type="entry name" value="DapE_proteobac"/>
</dbReference>
<dbReference type="InterPro" id="IPR002933">
    <property type="entry name" value="Peptidase_M20"/>
</dbReference>
<dbReference type="InterPro" id="IPR011650">
    <property type="entry name" value="Peptidase_M20_dimer"/>
</dbReference>
<dbReference type="InterPro" id="IPR050072">
    <property type="entry name" value="Peptidase_M20A"/>
</dbReference>
<dbReference type="NCBIfam" id="TIGR01246">
    <property type="entry name" value="dapE_proteo"/>
    <property type="match status" value="1"/>
</dbReference>
<dbReference type="NCBIfam" id="NF009557">
    <property type="entry name" value="PRK13009.1"/>
    <property type="match status" value="1"/>
</dbReference>
<dbReference type="PANTHER" id="PTHR43808">
    <property type="entry name" value="ACETYLORNITHINE DEACETYLASE"/>
    <property type="match status" value="1"/>
</dbReference>
<dbReference type="PANTHER" id="PTHR43808:SF31">
    <property type="entry name" value="N-ACETYL-L-CITRULLINE DEACETYLASE"/>
    <property type="match status" value="1"/>
</dbReference>
<dbReference type="Pfam" id="PF07687">
    <property type="entry name" value="M20_dimer"/>
    <property type="match status" value="1"/>
</dbReference>
<dbReference type="Pfam" id="PF01546">
    <property type="entry name" value="Peptidase_M20"/>
    <property type="match status" value="1"/>
</dbReference>
<dbReference type="SUPFAM" id="SSF55031">
    <property type="entry name" value="Bacterial exopeptidase dimerisation domain"/>
    <property type="match status" value="1"/>
</dbReference>
<dbReference type="SUPFAM" id="SSF53187">
    <property type="entry name" value="Zn-dependent exopeptidases"/>
    <property type="match status" value="1"/>
</dbReference>
<evidence type="ECO:0000255" key="1">
    <source>
        <dbReference type="HAMAP-Rule" id="MF_01690"/>
    </source>
</evidence>
<sequence>MTDALTITRDLIRCPSVTPADAGALGVLEALLKQAGFTTHRVTFSEPGTADIDNLYARIGTEGPHITFAGHTDVVPPGDEASWSLPAFSGEVKDGYIYGRGAVDMKGGIACSVAAALDYLRDHGSQPKGSISFLITGDEEDVSINGTIKLLQWAADRGETFDHCVLGEPSNQEVMGDCIKIGRRGSQSGTLIVEGKQGHVAYPHRASNPVPDISRLIVALSDEPLDNGSAQFQPSNLEFTTVDVGNTATNVIAGIARAKFNIRYNDCHTQESLRALVEQRLAKACGNRIRAHIDWLPSNSDVFLTKPGPFTDLAVAAIEEVTGRKPELSTTGGTSDARFISSYCPVIEFGLVGQTMHQIDERASVADIATLTKIYRGILDRYFA</sequence>
<accession>A4YLC3</accession>
<organism>
    <name type="scientific">Bradyrhizobium sp. (strain ORS 278)</name>
    <dbReference type="NCBI Taxonomy" id="114615"/>
    <lineage>
        <taxon>Bacteria</taxon>
        <taxon>Pseudomonadati</taxon>
        <taxon>Pseudomonadota</taxon>
        <taxon>Alphaproteobacteria</taxon>
        <taxon>Hyphomicrobiales</taxon>
        <taxon>Nitrobacteraceae</taxon>
        <taxon>Bradyrhizobium</taxon>
    </lineage>
</organism>
<comment type="function">
    <text evidence="1">Catalyzes the hydrolysis of N-succinyl-L,L-diaminopimelic acid (SDAP), forming succinate and LL-2,6-diaminopimelate (DAP), an intermediate involved in the bacterial biosynthesis of lysine and meso-diaminopimelic acid, an essential component of bacterial cell walls.</text>
</comment>
<comment type="catalytic activity">
    <reaction evidence="1">
        <text>N-succinyl-(2S,6S)-2,6-diaminopimelate + H2O = (2S,6S)-2,6-diaminopimelate + succinate</text>
        <dbReference type="Rhea" id="RHEA:22608"/>
        <dbReference type="ChEBI" id="CHEBI:15377"/>
        <dbReference type="ChEBI" id="CHEBI:30031"/>
        <dbReference type="ChEBI" id="CHEBI:57609"/>
        <dbReference type="ChEBI" id="CHEBI:58087"/>
        <dbReference type="EC" id="3.5.1.18"/>
    </reaction>
</comment>
<comment type="cofactor">
    <cofactor evidence="1">
        <name>Zn(2+)</name>
        <dbReference type="ChEBI" id="CHEBI:29105"/>
    </cofactor>
    <cofactor evidence="1">
        <name>Co(2+)</name>
        <dbReference type="ChEBI" id="CHEBI:48828"/>
    </cofactor>
    <text evidence="1">Binds 2 Zn(2+) or Co(2+) ions per subunit.</text>
</comment>
<comment type="pathway">
    <text evidence="1">Amino-acid biosynthesis; L-lysine biosynthesis via DAP pathway; LL-2,6-diaminopimelate from (S)-tetrahydrodipicolinate (succinylase route): step 3/3.</text>
</comment>
<comment type="subunit">
    <text evidence="1">Homodimer.</text>
</comment>
<comment type="similarity">
    <text evidence="1">Belongs to the peptidase M20A family. DapE subfamily.</text>
</comment>